<keyword id="KW-0927">Auxin signaling pathway</keyword>
<keyword id="KW-1003">Cell membrane</keyword>
<keyword id="KW-0249">Electron transport</keyword>
<keyword id="KW-0325">Glycoprotein</keyword>
<keyword id="KW-0336">GPI-anchor</keyword>
<keyword id="KW-0349">Heme</keyword>
<keyword id="KW-0408">Iron</keyword>
<keyword id="KW-0449">Lipoprotein</keyword>
<keyword id="KW-0472">Membrane</keyword>
<keyword id="KW-0479">Metal-binding</keyword>
<keyword id="KW-1185">Reference proteome</keyword>
<keyword id="KW-0732">Signal</keyword>
<keyword id="KW-0813">Transport</keyword>
<organism>
    <name type="scientific">Arabidopsis thaliana</name>
    <name type="common">Mouse-ear cress</name>
    <dbReference type="NCBI Taxonomy" id="3702"/>
    <lineage>
        <taxon>Eukaryota</taxon>
        <taxon>Viridiplantae</taxon>
        <taxon>Streptophyta</taxon>
        <taxon>Embryophyta</taxon>
        <taxon>Tracheophyta</taxon>
        <taxon>Spermatophyta</taxon>
        <taxon>Magnoliopsida</taxon>
        <taxon>eudicotyledons</taxon>
        <taxon>Gunneridae</taxon>
        <taxon>Pentapetalae</taxon>
        <taxon>rosids</taxon>
        <taxon>malvids</taxon>
        <taxon>Brassicales</taxon>
        <taxon>Brassicaceae</taxon>
        <taxon>Camelineae</taxon>
        <taxon>Arabidopsis</taxon>
    </lineage>
</organism>
<feature type="signal peptide" evidence="1">
    <location>
        <begin position="1"/>
        <end position="25"/>
    </location>
</feature>
<feature type="chain" id="PRO_0000020655" description="Auxin-induced in root cultures protein 12">
    <location>
        <begin position="26"/>
        <end position="226"/>
    </location>
</feature>
<feature type="propeptide" id="PRO_0000020656" description="Removed in mature form" evidence="1">
    <location>
        <begin position="227"/>
        <end position="252"/>
    </location>
</feature>
<feature type="domain" description="DOMON" evidence="2">
    <location>
        <begin position="49"/>
        <end position="165"/>
    </location>
</feature>
<feature type="region of interest" description="Disordered" evidence="3">
    <location>
        <begin position="193"/>
        <end position="224"/>
    </location>
</feature>
<feature type="compositionally biased region" description="Low complexity" evidence="3">
    <location>
        <begin position="195"/>
        <end position="219"/>
    </location>
</feature>
<feature type="binding site" description="axial binding residue" evidence="1">
    <location>
        <position position="91"/>
    </location>
    <ligand>
        <name>heme</name>
        <dbReference type="ChEBI" id="CHEBI:30413"/>
    </ligand>
    <ligandPart>
        <name>Fe</name>
        <dbReference type="ChEBI" id="CHEBI:18248"/>
    </ligandPart>
</feature>
<feature type="binding site" description="axial binding residue" evidence="1">
    <location>
        <position position="176"/>
    </location>
    <ligand>
        <name>heme</name>
        <dbReference type="ChEBI" id="CHEBI:30413"/>
    </ligand>
    <ligandPart>
        <name>Fe</name>
        <dbReference type="ChEBI" id="CHEBI:18248"/>
    </ligandPart>
</feature>
<feature type="lipid moiety-binding region" description="GPI-anchor amidated asparagine" evidence="1">
    <location>
        <position position="226"/>
    </location>
</feature>
<feature type="glycosylation site" description="N-linked (GlcNAc...) asparagine" evidence="1">
    <location>
        <position position="58"/>
    </location>
</feature>
<feature type="glycosylation site" description="N-linked (GlcNAc...) asparagine" evidence="1">
    <location>
        <position position="61"/>
    </location>
</feature>
<feature type="glycosylation site" description="N-linked (GlcNAc...) asparagine" evidence="1">
    <location>
        <position position="114"/>
    </location>
</feature>
<feature type="glycosylation site" description="N-linked (GlcNAc...) asparagine" evidence="1">
    <location>
        <position position="167"/>
    </location>
</feature>
<feature type="sequence conflict" description="In Ref. 1; AAC62613." evidence="7" ref="1">
    <original>T</original>
    <variation>NR</variation>
    <location>
        <position position="147"/>
    </location>
</feature>
<feature type="sequence conflict" description="In Ref. 1; AAC62613." evidence="7" ref="1">
    <original>A</original>
    <variation>R</variation>
    <location>
        <position position="155"/>
    </location>
</feature>
<feature type="sequence conflict" description="In Ref. 1; AAC62613." evidence="7" ref="1">
    <original>P</original>
    <variation>PSPGSAP</variation>
    <location>
        <position position="207"/>
    </location>
</feature>
<gene>
    <name type="primary">AIR12</name>
    <name type="ordered locus">At3g07390</name>
    <name type="ORF">F21O3_10</name>
</gene>
<proteinExistence type="evidence at protein level"/>
<name>AIR12_ARATH</name>
<sequence>MASSSSSLLILAVACFVSLISPAISQQACKSQNLNSAGPFDSCEDLPVLNSYLHYTYNSSNSSLSVAFVATPSQANGGWVAWAINPTGTKMAGSQAFLAYRSGGGAAPVVKTYNISSYSSLVEGKLAFDFWNLRAESLSGGRIAIFTTVKVPAGADSVNQVWQIGGNVTNGRPGVHPFGPDNLGSHRVLSFTEDAAPGSAPSPGSAPAPGTSGSTTPGTAAGGPGNAGSLTRNVNFGVNLGILVLLGSIFIF</sequence>
<accession>Q94BT2</accession>
<accession>F4JEF2</accession>
<accession>O82442</accession>
<accession>Q9SRS7</accession>
<reference key="1">
    <citation type="journal article" date="1999" name="Plant Mol. Biol.">
        <title>Isolation and characterization of cDNA clones corresponding with mRNAs that accumulate during auxin-induced lateral root formation.</title>
        <authorList>
            <person name="Neuteboom L.W."/>
            <person name="Ng J.M.Y."/>
            <person name="Kuyper M."/>
            <person name="Clijdesdale O.R."/>
            <person name="Hooykaas P.J.J."/>
            <person name="van der Zaal B.J."/>
        </authorList>
    </citation>
    <scope>NUCLEOTIDE SEQUENCE [MRNA]</scope>
    <scope>INDUCTION</scope>
    <scope>DEVELOPMENTAL STAGE</scope>
    <source>
        <strain>cv. C24</strain>
        <tissue>Cultured root</tissue>
    </source>
</reference>
<reference key="2">
    <citation type="journal article" date="2000" name="Nature">
        <title>Sequence and analysis of chromosome 3 of the plant Arabidopsis thaliana.</title>
        <authorList>
            <person name="Salanoubat M."/>
            <person name="Lemcke K."/>
            <person name="Rieger M."/>
            <person name="Ansorge W."/>
            <person name="Unseld M."/>
            <person name="Fartmann B."/>
            <person name="Valle G."/>
            <person name="Bloecker H."/>
            <person name="Perez-Alonso M."/>
            <person name="Obermaier B."/>
            <person name="Delseny M."/>
            <person name="Boutry M."/>
            <person name="Grivell L.A."/>
            <person name="Mache R."/>
            <person name="Puigdomenech P."/>
            <person name="De Simone V."/>
            <person name="Choisne N."/>
            <person name="Artiguenave F."/>
            <person name="Robert C."/>
            <person name="Brottier P."/>
            <person name="Wincker P."/>
            <person name="Cattolico L."/>
            <person name="Weissenbach J."/>
            <person name="Saurin W."/>
            <person name="Quetier F."/>
            <person name="Schaefer M."/>
            <person name="Mueller-Auer S."/>
            <person name="Gabel C."/>
            <person name="Fuchs M."/>
            <person name="Benes V."/>
            <person name="Wurmbach E."/>
            <person name="Drzonek H."/>
            <person name="Erfle H."/>
            <person name="Jordan N."/>
            <person name="Bangert S."/>
            <person name="Wiedelmann R."/>
            <person name="Kranz H."/>
            <person name="Voss H."/>
            <person name="Holland R."/>
            <person name="Brandt P."/>
            <person name="Nyakatura G."/>
            <person name="Vezzi A."/>
            <person name="D'Angelo M."/>
            <person name="Pallavicini A."/>
            <person name="Toppo S."/>
            <person name="Simionati B."/>
            <person name="Conrad A."/>
            <person name="Hornischer K."/>
            <person name="Kauer G."/>
            <person name="Loehnert T.-H."/>
            <person name="Nordsiek G."/>
            <person name="Reichelt J."/>
            <person name="Scharfe M."/>
            <person name="Schoen O."/>
            <person name="Bargues M."/>
            <person name="Terol J."/>
            <person name="Climent J."/>
            <person name="Navarro P."/>
            <person name="Collado C."/>
            <person name="Perez-Perez A."/>
            <person name="Ottenwaelder B."/>
            <person name="Duchemin D."/>
            <person name="Cooke R."/>
            <person name="Laudie M."/>
            <person name="Berger-Llauro C."/>
            <person name="Purnelle B."/>
            <person name="Masuy D."/>
            <person name="de Haan M."/>
            <person name="Maarse A.C."/>
            <person name="Alcaraz J.-P."/>
            <person name="Cottet A."/>
            <person name="Casacuberta E."/>
            <person name="Monfort A."/>
            <person name="Argiriou A."/>
            <person name="Flores M."/>
            <person name="Liguori R."/>
            <person name="Vitale D."/>
            <person name="Mannhaupt G."/>
            <person name="Haase D."/>
            <person name="Schoof H."/>
            <person name="Rudd S."/>
            <person name="Zaccaria P."/>
            <person name="Mewes H.-W."/>
            <person name="Mayer K.F.X."/>
            <person name="Kaul S."/>
            <person name="Town C.D."/>
            <person name="Koo H.L."/>
            <person name="Tallon L.J."/>
            <person name="Jenkins J."/>
            <person name="Rooney T."/>
            <person name="Rizzo M."/>
            <person name="Walts A."/>
            <person name="Utterback T."/>
            <person name="Fujii C.Y."/>
            <person name="Shea T.P."/>
            <person name="Creasy T.H."/>
            <person name="Haas B."/>
            <person name="Maiti R."/>
            <person name="Wu D."/>
            <person name="Peterson J."/>
            <person name="Van Aken S."/>
            <person name="Pai G."/>
            <person name="Militscher J."/>
            <person name="Sellers P."/>
            <person name="Gill J.E."/>
            <person name="Feldblyum T.V."/>
            <person name="Preuss D."/>
            <person name="Lin X."/>
            <person name="Nierman W.C."/>
            <person name="Salzberg S.L."/>
            <person name="White O."/>
            <person name="Venter J.C."/>
            <person name="Fraser C.M."/>
            <person name="Kaneko T."/>
            <person name="Nakamura Y."/>
            <person name="Sato S."/>
            <person name="Kato T."/>
            <person name="Asamizu E."/>
            <person name="Sasamoto S."/>
            <person name="Kimura T."/>
            <person name="Idesawa K."/>
            <person name="Kawashima K."/>
            <person name="Kishida Y."/>
            <person name="Kiyokawa C."/>
            <person name="Kohara M."/>
            <person name="Matsumoto M."/>
            <person name="Matsuno A."/>
            <person name="Muraki A."/>
            <person name="Nakayama S."/>
            <person name="Nakazaki N."/>
            <person name="Shinpo S."/>
            <person name="Takeuchi C."/>
            <person name="Wada T."/>
            <person name="Watanabe A."/>
            <person name="Yamada M."/>
            <person name="Yasuda M."/>
            <person name="Tabata S."/>
        </authorList>
    </citation>
    <scope>NUCLEOTIDE SEQUENCE [LARGE SCALE GENOMIC DNA]</scope>
    <source>
        <strain>cv. Columbia</strain>
    </source>
</reference>
<reference key="3">
    <citation type="journal article" date="2017" name="Plant J.">
        <title>Araport11: a complete reannotation of the Arabidopsis thaliana reference genome.</title>
        <authorList>
            <person name="Cheng C.Y."/>
            <person name="Krishnakumar V."/>
            <person name="Chan A.P."/>
            <person name="Thibaud-Nissen F."/>
            <person name="Schobel S."/>
            <person name="Town C.D."/>
        </authorList>
    </citation>
    <scope>GENOME REANNOTATION</scope>
    <source>
        <strain>cv. Columbia</strain>
    </source>
</reference>
<reference key="4">
    <citation type="journal article" date="2003" name="Science">
        <title>Empirical analysis of transcriptional activity in the Arabidopsis genome.</title>
        <authorList>
            <person name="Yamada K."/>
            <person name="Lim J."/>
            <person name="Dale J.M."/>
            <person name="Chen H."/>
            <person name="Shinn P."/>
            <person name="Palm C.J."/>
            <person name="Southwick A.M."/>
            <person name="Wu H.C."/>
            <person name="Kim C.J."/>
            <person name="Nguyen M."/>
            <person name="Pham P.K."/>
            <person name="Cheuk R.F."/>
            <person name="Karlin-Newmann G."/>
            <person name="Liu S.X."/>
            <person name="Lam B."/>
            <person name="Sakano H."/>
            <person name="Wu T."/>
            <person name="Yu G."/>
            <person name="Miranda M."/>
            <person name="Quach H.L."/>
            <person name="Tripp M."/>
            <person name="Chang C.H."/>
            <person name="Lee J.M."/>
            <person name="Toriumi M.J."/>
            <person name="Chan M.M."/>
            <person name="Tang C.C."/>
            <person name="Onodera C.S."/>
            <person name="Deng J.M."/>
            <person name="Akiyama K."/>
            <person name="Ansari Y."/>
            <person name="Arakawa T."/>
            <person name="Banh J."/>
            <person name="Banno F."/>
            <person name="Bowser L."/>
            <person name="Brooks S.Y."/>
            <person name="Carninci P."/>
            <person name="Chao Q."/>
            <person name="Choy N."/>
            <person name="Enju A."/>
            <person name="Goldsmith A.D."/>
            <person name="Gurjal M."/>
            <person name="Hansen N.F."/>
            <person name="Hayashizaki Y."/>
            <person name="Johnson-Hopson C."/>
            <person name="Hsuan V.W."/>
            <person name="Iida K."/>
            <person name="Karnes M."/>
            <person name="Khan S."/>
            <person name="Koesema E."/>
            <person name="Ishida J."/>
            <person name="Jiang P.X."/>
            <person name="Jones T."/>
            <person name="Kawai J."/>
            <person name="Kamiya A."/>
            <person name="Meyers C."/>
            <person name="Nakajima M."/>
            <person name="Narusaka M."/>
            <person name="Seki M."/>
            <person name="Sakurai T."/>
            <person name="Satou M."/>
            <person name="Tamse R."/>
            <person name="Vaysberg M."/>
            <person name="Wallender E.K."/>
            <person name="Wong C."/>
            <person name="Yamamura Y."/>
            <person name="Yuan S."/>
            <person name="Shinozaki K."/>
            <person name="Davis R.W."/>
            <person name="Theologis A."/>
            <person name="Ecker J.R."/>
        </authorList>
    </citation>
    <scope>NUCLEOTIDE SEQUENCE [LARGE SCALE MRNA] OF 8-252</scope>
    <source>
        <strain>cv. Columbia</strain>
    </source>
</reference>
<reference key="5">
    <citation type="journal article" date="2003" name="Mol. Cell. Proteomics">
        <title>Large-scale analysis of in vivo phosphorylated membrane proteins by immobilized metal ion affinity chromatography and mass spectrometry.</title>
        <authorList>
            <person name="Nuehse T.S."/>
            <person name="Stensballe A."/>
            <person name="Jensen O.N."/>
            <person name="Peck S.C."/>
        </authorList>
    </citation>
    <scope>IDENTIFICATION BY MASS SPECTROMETRY [LARGE SCALE ANALYSIS]</scope>
    <source>
        <strain>cv. La-0</strain>
    </source>
</reference>
<reference key="6">
    <citation type="journal article" date="2006" name="Plant Cell Physiol.">
        <title>Expression profiling of auxin-treated Arabidopsis roots: toward a molecular analysis of lateral root emergence.</title>
        <authorList>
            <person name="Laskowski M."/>
            <person name="Biller S."/>
            <person name="Stanley K."/>
            <person name="Kajstura T."/>
            <person name="Prusty R."/>
        </authorList>
    </citation>
    <scope>INDUCTION BY AUXIN</scope>
</reference>
<reference key="7">
    <citation type="journal article" date="2009" name="Plant Physiol.">
        <title>Auxin-responsive genes AIR12 code for a new family of plasma membrane b-type cytochromes specific to flowering plants.</title>
        <authorList>
            <person name="Preger V."/>
            <person name="Tango N."/>
            <person name="Marchand C."/>
            <person name="Lemaire S.D."/>
            <person name="Carbonera D."/>
            <person name="Di Valentin M."/>
            <person name="Costa A."/>
            <person name="Pupillo P."/>
            <person name="Trost P."/>
        </authorList>
    </citation>
    <scope>COFACTOR</scope>
    <scope>FUNCTION</scope>
    <scope>DOMAIN</scope>
</reference>
<dbReference type="EMBL" id="AF055850">
    <property type="protein sequence ID" value="AAC62613.1"/>
    <property type="status" value="ALT_INIT"/>
    <property type="molecule type" value="mRNA"/>
</dbReference>
<dbReference type="EMBL" id="AC009853">
    <property type="protein sequence ID" value="AAF02148.1"/>
    <property type="molecule type" value="Genomic_DNA"/>
</dbReference>
<dbReference type="EMBL" id="CP002686">
    <property type="protein sequence ID" value="AEE74537.1"/>
    <property type="status" value="ALT_INIT"/>
    <property type="molecule type" value="Genomic_DNA"/>
</dbReference>
<dbReference type="EMBL" id="AY039908">
    <property type="protein sequence ID" value="AAK64012.2"/>
    <property type="status" value="ALT_INIT"/>
    <property type="molecule type" value="mRNA"/>
</dbReference>
<dbReference type="EMBL" id="AY077679">
    <property type="protein sequence ID" value="AAL76157.1"/>
    <property type="molecule type" value="mRNA"/>
</dbReference>
<dbReference type="PIR" id="T51337">
    <property type="entry name" value="T51337"/>
</dbReference>
<dbReference type="RefSeq" id="NP_566306.3">
    <property type="nucleotide sequence ID" value="NM_111618.3"/>
</dbReference>
<dbReference type="STRING" id="3702.Q94BT2"/>
<dbReference type="GlyCosmos" id="Q94BT2">
    <property type="glycosylation" value="4 sites, No reported glycans"/>
</dbReference>
<dbReference type="GlyGen" id="Q94BT2">
    <property type="glycosylation" value="5 sites"/>
</dbReference>
<dbReference type="PaxDb" id="3702-AT3G07390.1"/>
<dbReference type="ProteomicsDB" id="245010"/>
<dbReference type="GeneID" id="819927"/>
<dbReference type="KEGG" id="ath:AT3G07390"/>
<dbReference type="Araport" id="AT3G07390"/>
<dbReference type="TAIR" id="AT3G07390">
    <property type="gene designation" value="AIR12"/>
</dbReference>
<dbReference type="eggNOG" id="KOG4293">
    <property type="taxonomic scope" value="Eukaryota"/>
</dbReference>
<dbReference type="HOGENOM" id="CLU_036675_2_0_1"/>
<dbReference type="InParanoid" id="Q94BT2"/>
<dbReference type="PhylomeDB" id="Q94BT2"/>
<dbReference type="PRO" id="PR:Q94BT2"/>
<dbReference type="Proteomes" id="UP000006548">
    <property type="component" value="Chromosome 3"/>
</dbReference>
<dbReference type="ExpressionAtlas" id="Q94BT2">
    <property type="expression patterns" value="baseline and differential"/>
</dbReference>
<dbReference type="GO" id="GO:0005886">
    <property type="term" value="C:plasma membrane"/>
    <property type="evidence" value="ECO:0007669"/>
    <property type="project" value="UniProtKB-SubCell"/>
</dbReference>
<dbReference type="GO" id="GO:0098552">
    <property type="term" value="C:side of membrane"/>
    <property type="evidence" value="ECO:0007669"/>
    <property type="project" value="UniProtKB-KW"/>
</dbReference>
<dbReference type="GO" id="GO:0046872">
    <property type="term" value="F:metal ion binding"/>
    <property type="evidence" value="ECO:0007669"/>
    <property type="project" value="UniProtKB-KW"/>
</dbReference>
<dbReference type="GO" id="GO:0009734">
    <property type="term" value="P:auxin-activated signaling pathway"/>
    <property type="evidence" value="ECO:0007669"/>
    <property type="project" value="UniProtKB-KW"/>
</dbReference>
<dbReference type="CDD" id="cd09629">
    <property type="entry name" value="DOMON_CIL1_like"/>
    <property type="match status" value="1"/>
</dbReference>
<dbReference type="InterPro" id="IPR045265">
    <property type="entry name" value="AIR12_DOMON"/>
</dbReference>
<dbReference type="InterPro" id="IPR005018">
    <property type="entry name" value="DOMON_domain"/>
</dbReference>
<dbReference type="PANTHER" id="PTHR23130:SF157">
    <property type="entry name" value="AUXIN-INDUCED IN ROOT CULTURES PROTEIN 12"/>
    <property type="match status" value="1"/>
</dbReference>
<dbReference type="PANTHER" id="PTHR23130">
    <property type="entry name" value="CYTOCHROME B561 AND DOMON DOMAIN-CONTAINING PROTEIN"/>
    <property type="match status" value="1"/>
</dbReference>
<dbReference type="Pfam" id="PF04526">
    <property type="entry name" value="DUF568"/>
    <property type="match status" value="1"/>
</dbReference>
<dbReference type="PROSITE" id="PS50836">
    <property type="entry name" value="DOMON"/>
    <property type="match status" value="1"/>
</dbReference>
<comment type="function">
    <text evidence="8">One-heme-containing cytochrome.</text>
</comment>
<comment type="cofactor">
    <cofactor evidence="7">
        <name>heme</name>
        <dbReference type="ChEBI" id="CHEBI:30413"/>
    </cofactor>
    <text evidence="7">Binds 1 heme group non-covalently.</text>
</comment>
<comment type="subcellular location">
    <subcellularLocation>
        <location>Cell membrane</location>
        <topology>Lipid-anchor</topology>
        <topology>GPI-anchor</topology>
    </subcellularLocation>
</comment>
<comment type="developmental stage">
    <text evidence="4">Expressed during auxin-induced lateral root formation.</text>
</comment>
<comment type="induction">
    <text evidence="4 5">Induced between 4 and 8 hours after treatment with auxin and remains high for at least 24 hours.</text>
</comment>
<comment type="domain">
    <text evidence="6">DOMON domain could bind one heme b.</text>
</comment>
<comment type="sequence caution" evidence="7">
    <conflict type="erroneous initiation">
        <sequence resource="EMBL-CDS" id="AAC62613"/>
    </conflict>
    <text>Extended N-terminus.</text>
</comment>
<comment type="sequence caution" evidence="7">
    <conflict type="erroneous initiation">
        <sequence resource="EMBL-CDS" id="AAK64012"/>
    </conflict>
    <text>Truncated N-terminus.</text>
</comment>
<comment type="sequence caution" evidence="7">
    <conflict type="erroneous initiation">
        <sequence resource="EMBL-CDS" id="AEE74537"/>
    </conflict>
    <text>Extended N-terminus.</text>
</comment>
<evidence type="ECO:0000255" key="1"/>
<evidence type="ECO:0000255" key="2">
    <source>
        <dbReference type="PROSITE-ProRule" id="PRU00246"/>
    </source>
</evidence>
<evidence type="ECO:0000256" key="3">
    <source>
        <dbReference type="SAM" id="MobiDB-lite"/>
    </source>
</evidence>
<evidence type="ECO:0000269" key="4">
    <source>
    </source>
</evidence>
<evidence type="ECO:0000269" key="5">
    <source>
    </source>
</evidence>
<evidence type="ECO:0000269" key="6">
    <source>
    </source>
</evidence>
<evidence type="ECO:0000305" key="7"/>
<evidence type="ECO:0000305" key="8">
    <source>
    </source>
</evidence>
<protein>
    <recommendedName>
        <fullName>Auxin-induced in root cultures protein 12</fullName>
    </recommendedName>
</protein>